<dbReference type="EMBL" id="Y14634">
    <property type="protein sequence ID" value="CAA74978.1"/>
    <property type="molecule type" value="mRNA"/>
</dbReference>
<dbReference type="EMBL" id="AF348465">
    <property type="protein sequence ID" value="AAK40101.1"/>
    <property type="molecule type" value="mRNA"/>
</dbReference>
<dbReference type="EMBL" id="AL626807">
    <property type="status" value="NOT_ANNOTATED_CDS"/>
    <property type="molecule type" value="Genomic_DNA"/>
</dbReference>
<dbReference type="EMBL" id="AL645626">
    <property type="status" value="NOT_ANNOTATED_CDS"/>
    <property type="molecule type" value="Genomic_DNA"/>
</dbReference>
<dbReference type="EMBL" id="AL645842">
    <property type="status" value="NOT_ANNOTATED_CDS"/>
    <property type="molecule type" value="Genomic_DNA"/>
</dbReference>
<dbReference type="EMBL" id="AL663025">
    <property type="status" value="NOT_ANNOTATED_CDS"/>
    <property type="molecule type" value="Genomic_DNA"/>
</dbReference>
<dbReference type="CCDS" id="CCDS25137.1">
    <molecule id="Q925H0-2"/>
</dbReference>
<dbReference type="CCDS" id="CCDS36243.1">
    <molecule id="Q925H0-1"/>
</dbReference>
<dbReference type="RefSeq" id="NP_001029185.1">
    <molecule id="Q925H0-1"/>
    <property type="nucleotide sequence ID" value="NM_001034013.2"/>
</dbReference>
<dbReference type="RefSeq" id="NP_031410.1">
    <molecule id="Q925H0-2"/>
    <property type="nucleotide sequence ID" value="NM_007384.3"/>
</dbReference>
<dbReference type="SMR" id="Q925H0"/>
<dbReference type="BioGRID" id="197917">
    <property type="interactions" value="2"/>
</dbReference>
<dbReference type="FunCoup" id="Q925H0">
    <property type="interactions" value="280"/>
</dbReference>
<dbReference type="MINT" id="Q925H0"/>
<dbReference type="STRING" id="10090.ENSMUSP00000021045"/>
<dbReference type="BindingDB" id="Q925H0"/>
<dbReference type="ChEMBL" id="CHEMBL3232695"/>
<dbReference type="TCDB" id="1.A.6.1.8">
    <property type="family name" value="the epithelial na(+) channel (enac) family"/>
</dbReference>
<dbReference type="GlyConnect" id="2417">
    <molecule id="Q925H0-2"/>
    <property type="glycosylation" value="1 N-Linked glycan (1 site)"/>
</dbReference>
<dbReference type="GlyCosmos" id="Q925H0">
    <property type="glycosylation" value="2 sites, No reported glycans"/>
</dbReference>
<dbReference type="GlyGen" id="Q925H0">
    <property type="glycosylation" value="3 sites, 1 N-linked glycan (1 site)"/>
</dbReference>
<dbReference type="PhosphoSitePlus" id="Q925H0"/>
<dbReference type="ProteomicsDB" id="283185">
    <molecule id="Q925H0-1"/>
</dbReference>
<dbReference type="ProteomicsDB" id="283186">
    <molecule id="Q925H0-2"/>
</dbReference>
<dbReference type="Antibodypedia" id="15465">
    <property type="antibodies" value="222 antibodies from 32 providers"/>
</dbReference>
<dbReference type="DNASU" id="11418"/>
<dbReference type="Ensembl" id="ENSMUST00000021045.13">
    <molecule id="Q925H0-2"/>
    <property type="protein sequence ID" value="ENSMUSP00000021045.7"/>
    <property type="gene ID" value="ENSMUSG00000020704.14"/>
</dbReference>
<dbReference type="Ensembl" id="ENSMUST00000066197.7">
    <molecule id="Q925H0-1"/>
    <property type="protein sequence ID" value="ENSMUSP00000067095.7"/>
    <property type="gene ID" value="ENSMUSG00000020704.14"/>
</dbReference>
<dbReference type="GeneID" id="11418"/>
<dbReference type="KEGG" id="mmu:11418"/>
<dbReference type="UCSC" id="uc007kmm.2">
    <molecule id="Q925H0-1"/>
    <property type="organism name" value="mouse"/>
</dbReference>
<dbReference type="AGR" id="MGI:1100867"/>
<dbReference type="CTD" id="40"/>
<dbReference type="MGI" id="MGI:1100867">
    <property type="gene designation" value="Asic2"/>
</dbReference>
<dbReference type="VEuPathDB" id="HostDB:ENSMUSG00000020704"/>
<dbReference type="GeneTree" id="ENSGT00940000154991"/>
<dbReference type="HOGENOM" id="CLU_020415_1_2_1"/>
<dbReference type="InParanoid" id="Q925H0"/>
<dbReference type="OMA" id="QGHCLRR"/>
<dbReference type="OrthoDB" id="5874059at2759"/>
<dbReference type="TreeFam" id="TF330663"/>
<dbReference type="Reactome" id="R-MMU-2672351">
    <property type="pathway name" value="Stimuli-sensing channels"/>
</dbReference>
<dbReference type="BioGRID-ORCS" id="11418">
    <property type="hits" value="0 hits in 76 CRISPR screens"/>
</dbReference>
<dbReference type="ChiTaRS" id="Asic2">
    <property type="organism name" value="mouse"/>
</dbReference>
<dbReference type="PRO" id="PR:Q925H0"/>
<dbReference type="Proteomes" id="UP000000589">
    <property type="component" value="Chromosome 11"/>
</dbReference>
<dbReference type="RNAct" id="Q925H0">
    <property type="molecule type" value="protein"/>
</dbReference>
<dbReference type="Bgee" id="ENSMUSG00000020704">
    <property type="expression patterns" value="Expressed in perirhinal cortex and 100 other cell types or tissues"/>
</dbReference>
<dbReference type="ExpressionAtlas" id="Q925H0">
    <property type="expression patterns" value="baseline and differential"/>
</dbReference>
<dbReference type="GO" id="GO:0043197">
    <property type="term" value="C:dendritic spine"/>
    <property type="evidence" value="ECO:0000314"/>
    <property type="project" value="MGI"/>
</dbReference>
<dbReference type="GO" id="GO:0016020">
    <property type="term" value="C:membrane"/>
    <property type="evidence" value="ECO:0000314"/>
    <property type="project" value="MGI"/>
</dbReference>
<dbReference type="GO" id="GO:0043005">
    <property type="term" value="C:neuron projection"/>
    <property type="evidence" value="ECO:0000314"/>
    <property type="project" value="MGI"/>
</dbReference>
<dbReference type="GO" id="GO:0043025">
    <property type="term" value="C:neuronal cell body"/>
    <property type="evidence" value="ECO:0000314"/>
    <property type="project" value="MGI"/>
</dbReference>
<dbReference type="GO" id="GO:0005886">
    <property type="term" value="C:plasma membrane"/>
    <property type="evidence" value="ECO:0000314"/>
    <property type="project" value="MGI"/>
</dbReference>
<dbReference type="GO" id="GO:0098839">
    <property type="term" value="C:postsynaptic density membrane"/>
    <property type="evidence" value="ECO:0000314"/>
    <property type="project" value="SynGO"/>
</dbReference>
<dbReference type="GO" id="GO:0045202">
    <property type="term" value="C:synapse"/>
    <property type="evidence" value="ECO:0000314"/>
    <property type="project" value="MGI"/>
</dbReference>
<dbReference type="GO" id="GO:0015280">
    <property type="term" value="F:ligand-gated sodium channel activity"/>
    <property type="evidence" value="ECO:0000314"/>
    <property type="project" value="MGI"/>
</dbReference>
<dbReference type="GO" id="GO:0005261">
    <property type="term" value="F:monoatomic cation channel activity"/>
    <property type="evidence" value="ECO:0000314"/>
    <property type="project" value="MGI"/>
</dbReference>
<dbReference type="GO" id="GO:0005216">
    <property type="term" value="F:monoatomic ion channel activity"/>
    <property type="evidence" value="ECO:0000314"/>
    <property type="project" value="MGI"/>
</dbReference>
<dbReference type="GO" id="GO:0022839">
    <property type="term" value="F:monoatomic ion-gated channel activity"/>
    <property type="evidence" value="ECO:0000314"/>
    <property type="project" value="MGI"/>
</dbReference>
<dbReference type="GO" id="GO:0160125">
    <property type="term" value="F:pH-gated sodium channel activity"/>
    <property type="evidence" value="ECO:0000314"/>
    <property type="project" value="UniProtKB"/>
</dbReference>
<dbReference type="GO" id="GO:0050974">
    <property type="term" value="P:detection of mechanical stimulus involved in sensory perception"/>
    <property type="evidence" value="ECO:0000315"/>
    <property type="project" value="MGI"/>
</dbReference>
<dbReference type="GO" id="GO:0051649">
    <property type="term" value="P:establishment of localization in cell"/>
    <property type="evidence" value="ECO:0000314"/>
    <property type="project" value="MGI"/>
</dbReference>
<dbReference type="GO" id="GO:0006812">
    <property type="term" value="P:monoatomic cation transport"/>
    <property type="evidence" value="ECO:0000314"/>
    <property type="project" value="MGI"/>
</dbReference>
<dbReference type="GO" id="GO:0034220">
    <property type="term" value="P:monoatomic ion transmembrane transport"/>
    <property type="evidence" value="ECO:0000314"/>
    <property type="project" value="MGI"/>
</dbReference>
<dbReference type="GO" id="GO:0043066">
    <property type="term" value="P:negative regulation of apoptotic process"/>
    <property type="evidence" value="ECO:0000315"/>
    <property type="project" value="MGI"/>
</dbReference>
<dbReference type="GO" id="GO:0007602">
    <property type="term" value="P:phototransduction"/>
    <property type="evidence" value="ECO:0000315"/>
    <property type="project" value="MGI"/>
</dbReference>
<dbReference type="GO" id="GO:0051965">
    <property type="term" value="P:positive regulation of synapse assembly"/>
    <property type="evidence" value="ECO:0000315"/>
    <property type="project" value="MGI"/>
</dbReference>
<dbReference type="GO" id="GO:0035418">
    <property type="term" value="P:protein localization to synapse"/>
    <property type="evidence" value="ECO:0000315"/>
    <property type="project" value="MGI"/>
</dbReference>
<dbReference type="GO" id="GO:0042391">
    <property type="term" value="P:regulation of membrane potential"/>
    <property type="evidence" value="ECO:0000315"/>
    <property type="project" value="MGI"/>
</dbReference>
<dbReference type="GO" id="GO:0034765">
    <property type="term" value="P:regulation of monoatomic ion transmembrane transport"/>
    <property type="evidence" value="ECO:0000315"/>
    <property type="project" value="MGI"/>
</dbReference>
<dbReference type="GO" id="GO:0150052">
    <property type="term" value="P:regulation of postsynapse assembly"/>
    <property type="evidence" value="ECO:0000314"/>
    <property type="project" value="SynGO"/>
</dbReference>
<dbReference type="GO" id="GO:0003026">
    <property type="term" value="P:regulation of systemic arterial blood pressure by aortic arch baroreceptor feedback"/>
    <property type="evidence" value="ECO:0000315"/>
    <property type="project" value="MGI"/>
</dbReference>
<dbReference type="GO" id="GO:0019229">
    <property type="term" value="P:regulation of vasoconstriction"/>
    <property type="evidence" value="ECO:0000315"/>
    <property type="project" value="MGI"/>
</dbReference>
<dbReference type="GO" id="GO:0010447">
    <property type="term" value="P:response to acidic pH"/>
    <property type="evidence" value="ECO:0000314"/>
    <property type="project" value="MGI"/>
</dbReference>
<dbReference type="GO" id="GO:0009612">
    <property type="term" value="P:response to mechanical stimulus"/>
    <property type="evidence" value="ECO:0000315"/>
    <property type="project" value="MGI"/>
</dbReference>
<dbReference type="GO" id="GO:0007605">
    <property type="term" value="P:sensory perception of sound"/>
    <property type="evidence" value="ECO:0000315"/>
    <property type="project" value="MGI"/>
</dbReference>
<dbReference type="GO" id="GO:0050915">
    <property type="term" value="P:sensory perception of sour taste"/>
    <property type="evidence" value="ECO:0007669"/>
    <property type="project" value="Ensembl"/>
</dbReference>
<dbReference type="GO" id="GO:0006814">
    <property type="term" value="P:sodium ion transport"/>
    <property type="evidence" value="ECO:0000314"/>
    <property type="project" value="MGI"/>
</dbReference>
<dbReference type="GO" id="GO:0007416">
    <property type="term" value="P:synapse assembly"/>
    <property type="evidence" value="ECO:0000315"/>
    <property type="project" value="MGI"/>
</dbReference>
<dbReference type="FunFam" id="1.10.287.820:FF:000001">
    <property type="entry name" value="acid-sensing ion channel 1 isoform X2"/>
    <property type="match status" value="1"/>
</dbReference>
<dbReference type="FunFam" id="1.10.3590.10:FF:000001">
    <property type="entry name" value="acid-sensing ion channel 1 isoform X2"/>
    <property type="match status" value="1"/>
</dbReference>
<dbReference type="FunFam" id="1.10.3590.10:FF:000002">
    <property type="entry name" value="acid-sensing ion channel 1 isoform X2"/>
    <property type="match status" value="1"/>
</dbReference>
<dbReference type="FunFam" id="1.10.287.770:FF:000006">
    <property type="entry name" value="acid-sensing ion channel 2"/>
    <property type="match status" value="1"/>
</dbReference>
<dbReference type="FunFam" id="1.10.287.770:FF:000001">
    <property type="entry name" value="Acid-sensing ion channel subunit 1"/>
    <property type="match status" value="1"/>
</dbReference>
<dbReference type="Gene3D" id="1.10.3590.10">
    <property type="entry name" value="acid-sensing ion channel 1 domain"/>
    <property type="match status" value="2"/>
</dbReference>
<dbReference type="Gene3D" id="1.10.287.820">
    <property type="entry name" value="Acid-sensing ion channel domain"/>
    <property type="match status" value="1"/>
</dbReference>
<dbReference type="Gene3D" id="1.10.287.770">
    <property type="entry name" value="YojJ-like"/>
    <property type="match status" value="2"/>
</dbReference>
<dbReference type="InterPro" id="IPR001873">
    <property type="entry name" value="ENaC"/>
</dbReference>
<dbReference type="InterPro" id="IPR004724">
    <property type="entry name" value="ENaC_chordates"/>
</dbReference>
<dbReference type="InterPro" id="IPR020903">
    <property type="entry name" value="ENaC_CS"/>
</dbReference>
<dbReference type="NCBIfam" id="TIGR00859">
    <property type="entry name" value="ENaC"/>
    <property type="match status" value="1"/>
</dbReference>
<dbReference type="PANTHER" id="PTHR11690:SF128">
    <property type="entry name" value="ACID-SENSING ION CHANNEL 2"/>
    <property type="match status" value="1"/>
</dbReference>
<dbReference type="PANTHER" id="PTHR11690">
    <property type="entry name" value="AMILORIDE-SENSITIVE SODIUM CHANNEL-RELATED"/>
    <property type="match status" value="1"/>
</dbReference>
<dbReference type="Pfam" id="PF00858">
    <property type="entry name" value="ASC"/>
    <property type="match status" value="1"/>
</dbReference>
<dbReference type="PRINTS" id="PR01078">
    <property type="entry name" value="AMINACHANNEL"/>
</dbReference>
<dbReference type="PROSITE" id="PS01206">
    <property type="entry name" value="ASC"/>
    <property type="match status" value="1"/>
</dbReference>
<sequence>MDLKESPSEGSLQPSSIQIFANTSTLHGIRHIFVYGPLTIRRVLWAVAFVGSLGLLLVESSERVSYYFSYQHVTKVDEVVAQSLVFPAVTLCNLNGFRFSRLTTNDLYHAGELLALLDVNLQIPDPHLADPTVLEALRQKANFKHYKPKQFSMLEFLHRVGHDLKDMMLYCKFKGQECGHQDFTTVFTKYGKCYMFNSGEDGKPLLTTVKGGTGNGLEIMLDIQQDEYLPIWGETEETTFEAGVKVQIHSQSEPPFIQELGFGVAPGFQTFVATQEQRLTYLPPPWGECRSSEMGLDFFPVYSITACRIDCETRYIVENCNCRMVHMPGDAPFCTPEQHKECAEPALGLLAEKDSNYCLCRTPCNLTRYNKELSMVKIPSKTSAKYLEKKFNKSEKYISENILVLDIFFEALNYETIEQKKAYEVAALLGDIGGQMGLFIGASILTILELFDYIYELIKEKLLDLLGKEEEEGSHDENMSTCDTMPNHSETISHTVNVPLQTALGTLEEIAC</sequence>
<proteinExistence type="evidence at protein level"/>
<name>ASIC2_MOUSE</name>
<reference key="1">
    <citation type="journal article" date="1997" name="J. Biol. Chem.">
        <title>A modulatory subunit of acid sensing ion channels in brain and dorsal root ganglion cells.</title>
        <authorList>
            <person name="Lingueglia E."/>
            <person name="de Weille J.R."/>
            <person name="Bassilana F."/>
            <person name="Heurteaux C."/>
            <person name="Sakai H."/>
            <person name="Waldmann R."/>
            <person name="Lazdunski M."/>
        </authorList>
    </citation>
    <scope>NUCLEOTIDE SEQUENCE [MRNA] (ISOFORM 2)</scope>
    <scope>FUNCTION (ISOFORM 2)</scope>
    <scope>FUNCTION</scope>
    <scope>TRANSPORTER ACTIVITY</scope>
    <scope>ACTIVITY REGULATION</scope>
    <scope>SUBUNIT</scope>
    <source>
        <strain>BALB/cJ</strain>
        <tissue>Brain</tissue>
    </source>
</reference>
<reference key="2">
    <citation type="journal article" date="2001" name="J. Neurosci.">
        <title>Transport and localization of the DEG/ENaC ion channel BNaC1alpha to peripheral mechanosensory terminals of dorsal root ganglia neurons.</title>
        <authorList>
            <person name="Garcia-Anoveros J."/>
            <person name="Samad T.A."/>
            <person name="Zuvela-Jelaska L."/>
            <person name="Woolf C.J."/>
            <person name="Corey D.P."/>
        </authorList>
    </citation>
    <scope>NUCLEOTIDE SEQUENCE [MRNA] (ISOFORM 1)</scope>
    <scope>FUNCTION</scope>
    <scope>SUBCELLULAR LOCATION</scope>
    <source>
        <strain>BALB/cJ</strain>
    </source>
</reference>
<reference key="3">
    <citation type="journal article" date="2009" name="PLoS Biol.">
        <title>Lineage-specific biology revealed by a finished genome assembly of the mouse.</title>
        <authorList>
            <person name="Church D.M."/>
            <person name="Goodstadt L."/>
            <person name="Hillier L.W."/>
            <person name="Zody M.C."/>
            <person name="Goldstein S."/>
            <person name="She X."/>
            <person name="Bult C.J."/>
            <person name="Agarwala R."/>
            <person name="Cherry J.L."/>
            <person name="DiCuccio M."/>
            <person name="Hlavina W."/>
            <person name="Kapustin Y."/>
            <person name="Meric P."/>
            <person name="Maglott D."/>
            <person name="Birtle Z."/>
            <person name="Marques A.C."/>
            <person name="Graves T."/>
            <person name="Zhou S."/>
            <person name="Teague B."/>
            <person name="Potamousis K."/>
            <person name="Churas C."/>
            <person name="Place M."/>
            <person name="Herschleb J."/>
            <person name="Runnheim R."/>
            <person name="Forrest D."/>
            <person name="Amos-Landgraf J."/>
            <person name="Schwartz D.C."/>
            <person name="Cheng Z."/>
            <person name="Lindblad-Toh K."/>
            <person name="Eichler E.E."/>
            <person name="Ponting C.P."/>
        </authorList>
    </citation>
    <scope>NUCLEOTIDE SEQUENCE [LARGE SCALE GENOMIC DNA]</scope>
    <source>
        <strain>C57BL/6J</strain>
    </source>
</reference>
<reference key="4">
    <citation type="journal article" date="2000" name="Nature">
        <title>The mammalian sodium channel BNC1 is required for normal touch sensation.</title>
        <authorList>
            <person name="Price M.P."/>
            <person name="Lewin G.R."/>
            <person name="McIlwrath S.L."/>
            <person name="Cheng C."/>
            <person name="Xie J."/>
            <person name="Heppenstall P.A."/>
            <person name="Stucky C.L."/>
            <person name="Mannsfeldt A.G."/>
            <person name="Brennan T.J."/>
            <person name="Drummond H.A."/>
            <person name="Qiao J."/>
            <person name="Benson C.J."/>
            <person name="Tarr D.E."/>
            <person name="Hrstka R.F."/>
            <person name="Yang B."/>
            <person name="Williamson R.A."/>
            <person name="Welsh M.J."/>
        </authorList>
    </citation>
    <scope>FUNCTION</scope>
    <scope>DISRUPTION PHENOTYPE</scope>
</reference>
<reference key="5">
    <citation type="journal article" date="2004" name="J. Biol. Chem.">
        <title>Acid-sensing ion channel 2 (ASIC2) modulates ASIC1 H+-activated currents in hippocampal neurons.</title>
        <authorList>
            <person name="Askwith C.C."/>
            <person name="Wemmie J.A."/>
            <person name="Price M.P."/>
            <person name="Rokhlina T."/>
            <person name="Welsh M.J."/>
        </authorList>
    </citation>
    <scope>FUNCTION</scope>
    <scope>SUBUNIT</scope>
    <scope>ACTIVITY REGULATION</scope>
</reference>
<reference key="6">
    <citation type="journal article" date="2004" name="J. Biol. Chem.">
        <title>Stomatin modulates gating of acid-sensing ion channels.</title>
        <authorList>
            <person name="Price M.P."/>
            <person name="Thompson R.J."/>
            <person name="Eshcol J.O."/>
            <person name="Wemmie J.A."/>
            <person name="Benson C.J."/>
        </authorList>
    </citation>
    <scope>INTERACTION WITH STOM</scope>
</reference>
<reference key="7">
    <citation type="journal article" date="2004" name="J. Neurosci.">
        <title>Acid-sensing ion channel 2 is important for retinal function and protects against light-induced retinal degeneration.</title>
        <authorList>
            <person name="Ettaiche M."/>
            <person name="Guy N."/>
            <person name="Hofman P."/>
            <person name="Lazdunski M."/>
            <person name="Waldmann R."/>
        </authorList>
    </citation>
    <scope>FUNCTION</scope>
    <scope>TISSUE SPECIFICITY</scope>
    <scope>DISRUPTION PHENOTYPE</scope>
</reference>
<reference key="8">
    <citation type="journal article" date="2004" name="J. Neurosci.">
        <title>Acid-sensing ion channel 2 contributes a major component to acid-evoked excitatory responses in spiral ganglion neurons and plays a role in noise susceptibility of mice.</title>
        <authorList>
            <person name="Peng B.-G."/>
            <person name="Ahmad S."/>
            <person name="Chen S."/>
            <person name="Chen P."/>
            <person name="Price M.P."/>
            <person name="Lin X."/>
        </authorList>
    </citation>
    <scope>FUNCTION</scope>
    <scope>SUBCELLULAR LOCATION</scope>
    <scope>TISSUE SPECIFICITY</scope>
    <scope>DEVELOPMENTAL STAGE</scope>
    <scope>DISRUPTION PHENOTYPE</scope>
</reference>
<reference key="9">
    <citation type="journal article" date="2005" name="Neuroscience">
        <title>The sensory mechanotransduction ion channel ASIC2 (acid sensitive ion channel 2) is regulated by neurotrophin availability.</title>
        <authorList>
            <person name="McIlwrath S.L."/>
            <person name="Hu J."/>
            <person name="Anirudhan G."/>
            <person name="Shin J.-B."/>
            <person name="Lewin G.R."/>
        </authorList>
    </citation>
    <scope>SUBCELLULAR LOCATION</scope>
    <scope>INDUCTION BY NEUROTROPHIN</scope>
</reference>
<reference key="10">
    <citation type="journal article" date="2009" name="Neuron">
        <title>The ion channel ASIC2 is required for baroreceptor and autonomic control of the circulation.</title>
        <authorList>
            <person name="Lu Y."/>
            <person name="Ma X."/>
            <person name="Sabharwal R."/>
            <person name="Snitsarev V."/>
            <person name="Morgan D."/>
            <person name="Rahmouni K."/>
            <person name="Drummond H.A."/>
            <person name="Whiteis C.A."/>
            <person name="Costa V."/>
            <person name="Price M."/>
            <person name="Benson C."/>
            <person name="Welsh M.J."/>
            <person name="Chapleau M.W."/>
            <person name="Abboud F.M."/>
        </authorList>
    </citation>
    <scope>FUNCTION</scope>
    <scope>DISRUPTION PHENOTYPE</scope>
</reference>
<reference key="11">
    <citation type="journal article" date="2012" name="EMBO J.">
        <title>A stomatin dimer modulates the activity of acid-sensing ion channels.</title>
        <authorList>
            <person name="Brand J."/>
            <person name="Smith E.S."/>
            <person name="Schwefel D."/>
            <person name="Lapatsina L."/>
            <person name="Poole K."/>
            <person name="Omerbasic D."/>
            <person name="Kozlenkov A."/>
            <person name="Behlke J."/>
            <person name="Lewin G.R."/>
            <person name="Daumke O."/>
        </authorList>
    </citation>
    <scope>INTERACTION WITH STOM</scope>
</reference>
<protein>
    <recommendedName>
        <fullName evidence="20">Acid-sensing ion channel 2</fullName>
        <shortName>ASIC2</shortName>
    </recommendedName>
    <alternativeName>
        <fullName>Amiloride-sensitive cation channel 1, neuronal</fullName>
    </alternativeName>
    <alternativeName>
        <fullName evidence="17">Brain sodium channel 1</fullName>
        <shortName evidence="16">BNC1</shortName>
        <shortName evidence="17">BNaC1</shortName>
    </alternativeName>
</protein>
<comment type="function">
    <text evidence="6 7 8 9 11 13 15">Forms pH-gated trimeric sodium channels that act as postsynaptic excitatory sensors in the nervous system (PubMed:14960591, PubMed:9368048). Upon extracellular acidification, these channels generate rapid, transient inward currents that fully desensitize (PubMed:11306621, PubMed:14960591, PubMed:9368048). Highly selective for sodium, they are permeable to other cations (PubMed:9368048). By forming heterotrimeric channels with ASIC1, could contribute to synaptic plasticity, learning, and memory (PubMed:14960591). Additionally, as acid sensors at nerve terminals, plays a role in mechanosensation and phototransduction (PubMed:11069180, PubMed:14762118, PubMed:15537887, PubMed:20064394).</text>
</comment>
<comment type="function">
    <molecule>Isoform 2</molecule>
    <text evidence="15">Has no pH-gated sodium channel activity per se but can associate with other ASICs to produce functional channels with specific properties.</text>
</comment>
<comment type="catalytic activity">
    <reaction evidence="15">
        <text>Na(+)(in) = Na(+)(out)</text>
        <dbReference type="Rhea" id="RHEA:34963"/>
        <dbReference type="ChEBI" id="CHEBI:29101"/>
    </reaction>
</comment>
<comment type="catalytic activity">
    <reaction evidence="3">
        <text>K(+)(in) = K(+)(out)</text>
        <dbReference type="Rhea" id="RHEA:29463"/>
        <dbReference type="ChEBI" id="CHEBI:29103"/>
    </reaction>
</comment>
<comment type="catalytic activity">
    <reaction evidence="4">
        <text>Li(+)(in) = Li(+)(out)</text>
        <dbReference type="Rhea" id="RHEA:78551"/>
        <dbReference type="ChEBI" id="CHEBI:49713"/>
    </reaction>
</comment>
<comment type="activity regulation">
    <text evidence="15">Inhibited by the diuretic drug amiloride.</text>
</comment>
<comment type="subunit">
    <text evidence="3 9 10 14 15">Can form homotrimers (PubMed:14960591). Heterotrimer; forms functional heterotrimers producing channel with different properties (PubMed:14960591). Forms heterotrimers with ASIC1; while ASIC1 determines current amplitude, ASIC2 influences the properties of the current (PubMed:14960591). Forms heterotrimers with ASIC3; resulting in channels with distinct properties (PubMed:9368048). Interacts with STOM; STOM regulates the gating of ASIC2-containing channels (PubMed:15471860, PubMed:22850675). Interacts with PICK1; promotes ASIC3 phosphorylation by PKC and activation of ASIC2/ASIC3 heterotrimers (By similarity).</text>
</comment>
<comment type="subcellular location">
    <subcellularLocation>
        <location evidence="7 11 12">Cell membrane</location>
        <topology evidence="3">Multi-pass membrane protein</topology>
    </subcellularLocation>
    <text evidence="7">Localized at the plasma membrane, in the soma and punctated peripheral processes of neurons.</text>
</comment>
<comment type="alternative products">
    <event type="alternative splicing"/>
    <isoform>
        <id>Q925H0-1</id>
        <name>1</name>
        <name evidence="18">MDEG1</name>
        <name evidence="17">BNaC1-alpha</name>
        <name>Asic2a</name>
        <name evidence="16">BNC1a</name>
        <sequence type="displayed"/>
    </isoform>
    <isoform>
        <id>Q925H0-2</id>
        <name>2</name>
        <name evidence="18">MDEG2</name>
        <name>Asic2b</name>
        <name evidence="16">BNC1b</name>
        <sequence type="described" ref="VSP_015592 VSP_015593"/>
    </isoform>
</comment>
<comment type="tissue specificity">
    <text evidence="8 11">Expressed by sensory neurons. Expressed by nociceptive sensory neurons, spiral ganglion (SG) neurons and the retina (at protein level). Expressed in outer nuclear layer of retina (photoreceptors) and to a lower extent in distal and proximal inner nuclear layer.</text>
</comment>
<comment type="developmental stage">
    <text evidence="11">Expression changes dramatically during cochlear development. Expression is detected at 11.5 dpc in otocyst and increases in the SG neurons after 18.5 dpc. Also detected in the lumen side of all cells forming the vestibular cavity and at the top of the macula of saccule and utricle. Before birth expressed by epithelial cells facing the endolymphatic space. Post-natally expressed by cells in the apical turn of the cochlea, while expression on the lumen side of the membranous labyrinth decreases. Expression shifts gradually toward the top of supporting cells and the spiral limbus. Also expressed by vestibular ganglion neurons. Restricted to the SG neurons in the mature cochlea (at protein level).</text>
</comment>
<comment type="induction">
    <text evidence="12">Expression in a subset of neurons may be regulated by neurotrophins.</text>
</comment>
<comment type="disruption phenotype">
    <text evidence="6 8 11 13">Mice lacking Asic2 display reduced sensitivity of a specific component of mechanosensation (PubMed:11069180). They develop hypertension, exaggerated sympathetic and depressed parasympathetic control of the circulation, and a decreased gain of the baroreflex (PubMed:20064394). They also display altered rod phototransduction and neurotransmission, associated with increased light-induced retina damages (PubMed:14762118). Despite a normal hearing sensitivity, susceptibility to noise-induced temporary threshold shifts is decreased (PubMed:15537887).</text>
</comment>
<comment type="similarity">
    <text evidence="19">Belongs to the amiloride-sensitive sodium channel (TC 1.A.6) family. ASIC2 subfamily.</text>
</comment>
<gene>
    <name evidence="21" type="primary">Asic2</name>
    <name type="synonym">Accn1</name>
    <name type="synonym">Bnac1</name>
</gene>
<keyword id="KW-0025">Alternative splicing</keyword>
<keyword id="KW-1003">Cell membrane</keyword>
<keyword id="KW-1015">Disulfide bond</keyword>
<keyword id="KW-0325">Glycoprotein</keyword>
<keyword id="KW-0407">Ion channel</keyword>
<keyword id="KW-0406">Ion transport</keyword>
<keyword id="KW-0472">Membrane</keyword>
<keyword id="KW-0597">Phosphoprotein</keyword>
<keyword id="KW-1185">Reference proteome</keyword>
<keyword id="KW-0915">Sodium</keyword>
<keyword id="KW-0894">Sodium channel</keyword>
<keyword id="KW-0739">Sodium transport</keyword>
<keyword id="KW-0812">Transmembrane</keyword>
<keyword id="KW-1133">Transmembrane helix</keyword>
<keyword id="KW-0813">Transport</keyword>
<accession>Q925H0</accession>
<accession>Q5SUU2</accession>
<accession>Q61203</accession>
<organism>
    <name type="scientific">Mus musculus</name>
    <name type="common">Mouse</name>
    <dbReference type="NCBI Taxonomy" id="10090"/>
    <lineage>
        <taxon>Eukaryota</taxon>
        <taxon>Metazoa</taxon>
        <taxon>Chordata</taxon>
        <taxon>Craniata</taxon>
        <taxon>Vertebrata</taxon>
        <taxon>Euteleostomi</taxon>
        <taxon>Mammalia</taxon>
        <taxon>Eutheria</taxon>
        <taxon>Euarchontoglires</taxon>
        <taxon>Glires</taxon>
        <taxon>Rodentia</taxon>
        <taxon>Myomorpha</taxon>
        <taxon>Muroidea</taxon>
        <taxon>Muridae</taxon>
        <taxon>Murinae</taxon>
        <taxon>Mus</taxon>
        <taxon>Mus</taxon>
    </lineage>
</organism>
<feature type="chain" id="PRO_0000181291" description="Acid-sensing ion channel 2">
    <location>
        <begin position="1"/>
        <end position="512"/>
    </location>
</feature>
<feature type="topological domain" description="Cytoplasmic" evidence="1">
    <location>
        <begin position="1"/>
        <end position="37"/>
    </location>
</feature>
<feature type="transmembrane region" description="Helical" evidence="5">
    <location>
        <begin position="38"/>
        <end position="58"/>
    </location>
</feature>
<feature type="topological domain" description="Extracellular" evidence="1">
    <location>
        <begin position="59"/>
        <end position="427"/>
    </location>
</feature>
<feature type="transmembrane region" description="Helical" evidence="5">
    <location>
        <begin position="428"/>
        <end position="448"/>
    </location>
</feature>
<feature type="topological domain" description="Cytoplasmic" evidence="1">
    <location>
        <begin position="449"/>
        <end position="512"/>
    </location>
</feature>
<feature type="short sequence motif" description="GAS motif; ion selectivity filter" evidence="2">
    <location>
        <begin position="441"/>
        <end position="443"/>
    </location>
</feature>
<feature type="modified residue" description="Phosphoserine" evidence="4">
    <location>
        <position position="8"/>
    </location>
</feature>
<feature type="modified residue" description="Phosphoserine" evidence="4">
    <location>
        <position position="11"/>
    </location>
</feature>
<feature type="glycosylation site" description="N-linked (GlcNAc...) asparagine" evidence="5">
    <location>
        <position position="365"/>
    </location>
</feature>
<feature type="glycosylation site" description="N-linked (GlcNAc...) asparagine" evidence="5">
    <location>
        <position position="392"/>
    </location>
</feature>
<feature type="disulfide bond" evidence="3">
    <location>
        <begin position="92"/>
        <end position="193"/>
    </location>
</feature>
<feature type="disulfide bond" evidence="3">
    <location>
        <begin position="289"/>
        <end position="364"/>
    </location>
</feature>
<feature type="disulfide bond" evidence="3">
    <location>
        <begin position="307"/>
        <end position="360"/>
    </location>
</feature>
<feature type="disulfide bond" evidence="3">
    <location>
        <begin position="311"/>
        <end position="358"/>
    </location>
</feature>
<feature type="disulfide bond" evidence="3">
    <location>
        <begin position="320"/>
        <end position="342"/>
    </location>
</feature>
<feature type="disulfide bond" evidence="3">
    <location>
        <begin position="322"/>
        <end position="334"/>
    </location>
</feature>
<feature type="splice variant" id="VSP_015592" description="In isoform 2." evidence="18">
    <location>
        <begin position="1"/>
        <end position="184"/>
    </location>
</feature>
<feature type="splice variant" id="VSP_015593" description="In isoform 2." evidence="18">
    <original>T</original>
    <variation>MSRSGGARLPATALSGPGRFRMAREQPAPAAVAAARQPGGDRSGDRELQGPGVARRGRPSLSRTKLHGLRHMCAGRTAAGGSFQRRALWVLAFCTSLGLLLSWSSNRLLYWLSFPSHTRVHREWSRQLPFPAVTVCNNNPLRFPRLSKGDLYYAGHWLGLLLPNRTARPLVSELLRGDEPRRQWFRKLADFRLFLPPRHFEGISAAFMDRLGHQLEDMLLSCKYRGELCGPHNFSS</variation>
    <location>
        <position position="185"/>
    </location>
</feature>
<evidence type="ECO:0000250" key="1"/>
<evidence type="ECO:0000250" key="2">
    <source>
        <dbReference type="UniProtKB" id="P78348"/>
    </source>
</evidence>
<evidence type="ECO:0000250" key="3">
    <source>
        <dbReference type="UniProtKB" id="Q16515"/>
    </source>
</evidence>
<evidence type="ECO:0000250" key="4">
    <source>
        <dbReference type="UniProtKB" id="Q62962"/>
    </source>
</evidence>
<evidence type="ECO:0000255" key="5"/>
<evidence type="ECO:0000269" key="6">
    <source>
    </source>
</evidence>
<evidence type="ECO:0000269" key="7">
    <source>
    </source>
</evidence>
<evidence type="ECO:0000269" key="8">
    <source>
    </source>
</evidence>
<evidence type="ECO:0000269" key="9">
    <source>
    </source>
</evidence>
<evidence type="ECO:0000269" key="10">
    <source>
    </source>
</evidence>
<evidence type="ECO:0000269" key="11">
    <source>
    </source>
</evidence>
<evidence type="ECO:0000269" key="12">
    <source>
    </source>
</evidence>
<evidence type="ECO:0000269" key="13">
    <source>
    </source>
</evidence>
<evidence type="ECO:0000269" key="14">
    <source>
    </source>
</evidence>
<evidence type="ECO:0000269" key="15">
    <source>
    </source>
</evidence>
<evidence type="ECO:0000303" key="16">
    <source>
    </source>
</evidence>
<evidence type="ECO:0000303" key="17">
    <source>
    </source>
</evidence>
<evidence type="ECO:0000303" key="18">
    <source>
    </source>
</evidence>
<evidence type="ECO:0000305" key="19"/>
<evidence type="ECO:0000305" key="20">
    <source>
    </source>
</evidence>
<evidence type="ECO:0000312" key="21">
    <source>
        <dbReference type="MGI" id="MGI:1100867"/>
    </source>
</evidence>